<gene>
    <name type="primary">EXO84</name>
    <name type="ordered locus">ADL321W</name>
</gene>
<evidence type="ECO:0000250" key="1"/>
<evidence type="ECO:0000255" key="2"/>
<evidence type="ECO:0000256" key="3">
    <source>
        <dbReference type="SAM" id="MobiDB-lite"/>
    </source>
</evidence>
<evidence type="ECO:0000305" key="4"/>
<protein>
    <recommendedName>
        <fullName>Exocyst complex component EXO84</fullName>
    </recommendedName>
</protein>
<sequence>MVDFSLRKARNNWSKLSSPGKTRQQGSPTKLKSNAYEDFVSPRDTLQLPEIGMKDRRKVGTSMQRRLSVHNAKYIPPPIDYASAPALPTAVELPVRDNSLLSSELMKPNHRRPPVDIYGGRSLREILSNPQFQAKRFVHEKLGDATALEIDHFASNLNHLSQEIEQEIKSNINKSYNELMQVNKELAVASTELKDLRSKVQQLQVVMGQFTAMAEKRLLLEKEHFRQSNTSVMTTKSGSTGSGLLPPVKSGAAKKDRSSVIILEKIWTNELSSLFRSVEGAQKYIAPAPGRRILLESNDWMEINIATLKPLHATRIFLLNDMILVAVCRSDKKGELVANQCCSLRELTVAEESNYTLSFHFGNKHHSLYRSRTPTGYTALLNEIKSAKDELRDIYQAEEDNARKLRDSFTYLQSTQQSPSRDISSPARGHSRQRSLGTLQNTPSRASTYQENLLQNISMSMHTRSRSGGVNQTAVKLNLVYEELEELSVPVTRMNFGLAIKKLHSIENILKGITAEAEGEVMLLNLLRMKCNQTRTLITQKLTHVINTEYSDANKLESSTKSLILLGMPAEALQLFLHNRSNFIQDLVLQVGVHDNSNSYITQVAVIRCQTIKKVAIQFQKLFEGTTAKYSSVLVSWCNDEVDKHFFLMKKQLINDDQLTPQAIKISRKQIDELKSVGMDFVYKLDDFLKIHSNKIY</sequence>
<feature type="chain" id="PRO_0000118976" description="Exocyst complex component EXO84">
    <location>
        <begin position="1"/>
        <end position="697"/>
    </location>
</feature>
<feature type="region of interest" description="Disordered" evidence="3">
    <location>
        <begin position="13"/>
        <end position="33"/>
    </location>
</feature>
<feature type="region of interest" description="Disordered" evidence="3">
    <location>
        <begin position="231"/>
        <end position="250"/>
    </location>
</feature>
<feature type="region of interest" description="Disordered" evidence="3">
    <location>
        <begin position="411"/>
        <end position="445"/>
    </location>
</feature>
<feature type="coiled-coil region" evidence="2">
    <location>
        <begin position="149"/>
        <end position="212"/>
    </location>
</feature>
<feature type="coiled-coil region" evidence="2">
    <location>
        <begin position="377"/>
        <end position="407"/>
    </location>
</feature>
<feature type="compositionally biased region" description="Polar residues" evidence="3">
    <location>
        <begin position="13"/>
        <end position="32"/>
    </location>
</feature>
<feature type="compositionally biased region" description="Polar residues" evidence="3">
    <location>
        <begin position="411"/>
        <end position="423"/>
    </location>
</feature>
<feature type="compositionally biased region" description="Polar residues" evidence="3">
    <location>
        <begin position="434"/>
        <end position="445"/>
    </location>
</feature>
<feature type="cross-link" description="Glycyl lysine isopeptide (Lys-Gly) (interchain with G-Cter in ubiquitin)" evidence="1">
    <location>
        <position position="169"/>
    </location>
</feature>
<organism>
    <name type="scientific">Eremothecium gossypii (strain ATCC 10895 / CBS 109.51 / FGSC 9923 / NRRL Y-1056)</name>
    <name type="common">Yeast</name>
    <name type="synonym">Ashbya gossypii</name>
    <dbReference type="NCBI Taxonomy" id="284811"/>
    <lineage>
        <taxon>Eukaryota</taxon>
        <taxon>Fungi</taxon>
        <taxon>Dikarya</taxon>
        <taxon>Ascomycota</taxon>
        <taxon>Saccharomycotina</taxon>
        <taxon>Saccharomycetes</taxon>
        <taxon>Saccharomycetales</taxon>
        <taxon>Saccharomycetaceae</taxon>
        <taxon>Eremothecium</taxon>
    </lineage>
</organism>
<accession>Q75B91</accession>
<reference key="1">
    <citation type="journal article" date="2004" name="Science">
        <title>The Ashbya gossypii genome as a tool for mapping the ancient Saccharomyces cerevisiae genome.</title>
        <authorList>
            <person name="Dietrich F.S."/>
            <person name="Voegeli S."/>
            <person name="Brachat S."/>
            <person name="Lerch A."/>
            <person name="Gates K."/>
            <person name="Steiner S."/>
            <person name="Mohr C."/>
            <person name="Poehlmann R."/>
            <person name="Luedi P."/>
            <person name="Choi S."/>
            <person name="Wing R.A."/>
            <person name="Flavier A."/>
            <person name="Gaffney T.D."/>
            <person name="Philippsen P."/>
        </authorList>
    </citation>
    <scope>NUCLEOTIDE SEQUENCE [LARGE SCALE GENOMIC DNA]</scope>
    <source>
        <strain>ATCC 10895 / CBS 109.51 / FGSC 9923 / NRRL Y-1056</strain>
    </source>
</reference>
<reference key="2">
    <citation type="journal article" date="2013" name="G3 (Bethesda)">
        <title>Genomes of Ashbya fungi isolated from insects reveal four mating-type loci, numerous translocations, lack of transposons, and distinct gene duplications.</title>
        <authorList>
            <person name="Dietrich F.S."/>
            <person name="Voegeli S."/>
            <person name="Kuo S."/>
            <person name="Philippsen P."/>
        </authorList>
    </citation>
    <scope>GENOME REANNOTATION</scope>
    <scope>SEQUENCE REVISION TO 259; 262 AND 408</scope>
    <source>
        <strain>ATCC 10895 / CBS 109.51 / FGSC 9923 / NRRL Y-1056</strain>
    </source>
</reference>
<dbReference type="EMBL" id="AE016817">
    <property type="protein sequence ID" value="AAS51599.2"/>
    <property type="molecule type" value="Genomic_DNA"/>
</dbReference>
<dbReference type="RefSeq" id="NP_983775.2">
    <property type="nucleotide sequence ID" value="NM_209128.2"/>
</dbReference>
<dbReference type="SMR" id="Q75B91"/>
<dbReference type="FunCoup" id="Q75B91">
    <property type="interactions" value="195"/>
</dbReference>
<dbReference type="STRING" id="284811.Q75B91"/>
<dbReference type="EnsemblFungi" id="AAS51599">
    <property type="protein sequence ID" value="AAS51599"/>
    <property type="gene ID" value="AGOS_ADL321W"/>
</dbReference>
<dbReference type="GeneID" id="4619910"/>
<dbReference type="KEGG" id="ago:AGOS_ADL321W"/>
<dbReference type="eggNOG" id="KOG2215">
    <property type="taxonomic scope" value="Eukaryota"/>
</dbReference>
<dbReference type="HOGENOM" id="CLU_014732_0_0_1"/>
<dbReference type="InParanoid" id="Q75B91"/>
<dbReference type="OMA" id="AAWLPNR"/>
<dbReference type="OrthoDB" id="642193at2759"/>
<dbReference type="Proteomes" id="UP000000591">
    <property type="component" value="Chromosome IV"/>
</dbReference>
<dbReference type="GO" id="GO:0005935">
    <property type="term" value="C:cellular bud neck"/>
    <property type="evidence" value="ECO:0007669"/>
    <property type="project" value="EnsemblFungi"/>
</dbReference>
<dbReference type="GO" id="GO:0005934">
    <property type="term" value="C:cellular bud tip"/>
    <property type="evidence" value="ECO:0007669"/>
    <property type="project" value="EnsemblFungi"/>
</dbReference>
<dbReference type="GO" id="GO:0000145">
    <property type="term" value="C:exocyst"/>
    <property type="evidence" value="ECO:0000318"/>
    <property type="project" value="GO_Central"/>
</dbReference>
<dbReference type="GO" id="GO:0000131">
    <property type="term" value="C:incipient cellular bud site"/>
    <property type="evidence" value="ECO:0007669"/>
    <property type="project" value="EnsemblFungi"/>
</dbReference>
<dbReference type="GO" id="GO:0030133">
    <property type="term" value="C:transport vesicle"/>
    <property type="evidence" value="ECO:0007669"/>
    <property type="project" value="UniProtKB-SubCell"/>
</dbReference>
<dbReference type="GO" id="GO:0001927">
    <property type="term" value="P:exocyst assembly"/>
    <property type="evidence" value="ECO:0007669"/>
    <property type="project" value="EnsemblFungi"/>
</dbReference>
<dbReference type="GO" id="GO:0051601">
    <property type="term" value="P:exocyst localization"/>
    <property type="evidence" value="ECO:0007669"/>
    <property type="project" value="EnsemblFungi"/>
</dbReference>
<dbReference type="GO" id="GO:0006893">
    <property type="term" value="P:Golgi to plasma membrane transport"/>
    <property type="evidence" value="ECO:0000318"/>
    <property type="project" value="GO_Central"/>
</dbReference>
<dbReference type="GO" id="GO:0008104">
    <property type="term" value="P:protein localization"/>
    <property type="evidence" value="ECO:0000318"/>
    <property type="project" value="GO_Central"/>
</dbReference>
<dbReference type="GO" id="GO:0015031">
    <property type="term" value="P:protein transport"/>
    <property type="evidence" value="ECO:0007669"/>
    <property type="project" value="UniProtKB-KW"/>
</dbReference>
<dbReference type="GO" id="GO:0000245">
    <property type="term" value="P:spliceosomal complex assembly"/>
    <property type="evidence" value="ECO:0007669"/>
    <property type="project" value="EnsemblFungi"/>
</dbReference>
<dbReference type="Gene3D" id="1.20.58.1220">
    <property type="entry name" value="Exo84p, C-terminal helical domain"/>
    <property type="match status" value="1"/>
</dbReference>
<dbReference type="Gene3D" id="1.20.58.1210">
    <property type="entry name" value="Exo84p, N-terminal helical domain"/>
    <property type="match status" value="1"/>
</dbReference>
<dbReference type="Gene3D" id="2.30.29.30">
    <property type="entry name" value="Pleckstrin-homology domain (PH domain)/Phosphotyrosine-binding domain (PTB)"/>
    <property type="match status" value="1"/>
</dbReference>
<dbReference type="InterPro" id="IPR016159">
    <property type="entry name" value="Cullin_repeat-like_dom_sf"/>
</dbReference>
<dbReference type="InterPro" id="IPR033961">
    <property type="entry name" value="Exo84"/>
</dbReference>
<dbReference type="InterPro" id="IPR032403">
    <property type="entry name" value="Exo84_C"/>
</dbReference>
<dbReference type="InterPro" id="IPR042561">
    <property type="entry name" value="Exo84_C_1"/>
</dbReference>
<dbReference type="InterPro" id="IPR042560">
    <property type="entry name" value="Exo84_C_2"/>
</dbReference>
<dbReference type="InterPro" id="IPR011993">
    <property type="entry name" value="PH-like_dom_sf"/>
</dbReference>
<dbReference type="PANTHER" id="PTHR21426">
    <property type="entry name" value="EXOCYST COMPLEX COMPONENT 8"/>
    <property type="match status" value="1"/>
</dbReference>
<dbReference type="PANTHER" id="PTHR21426:SF12">
    <property type="entry name" value="EXOCYST COMPLEX COMPONENT 8"/>
    <property type="match status" value="1"/>
</dbReference>
<dbReference type="Pfam" id="PF16528">
    <property type="entry name" value="Exo84_C"/>
    <property type="match status" value="1"/>
</dbReference>
<dbReference type="Pfam" id="PF25345">
    <property type="entry name" value="PH_EXO84"/>
    <property type="match status" value="1"/>
</dbReference>
<dbReference type="Pfam" id="PF08700">
    <property type="entry name" value="VPS51_Exo84_N"/>
    <property type="match status" value="1"/>
</dbReference>
<dbReference type="SUPFAM" id="SSF74788">
    <property type="entry name" value="Cullin repeat-like"/>
    <property type="match status" value="1"/>
</dbReference>
<dbReference type="SUPFAM" id="SSF50729">
    <property type="entry name" value="PH domain-like"/>
    <property type="match status" value="1"/>
</dbReference>
<comment type="function">
    <text evidence="1">Involved in the secretory pathway as part of the exocyst complex which tethers secretory vesicles to the sites of exocytosis. Plays a role in both the assembly of the exocyst and the polarization of this complex to specific sites of the plasma membrane for exocytosis. Also involved in assembly of the spliceosome (By similarity).</text>
</comment>
<comment type="subunit">
    <text evidence="1">Component of the exocyst complex.</text>
</comment>
<comment type="subcellular location">
    <subcellularLocation>
        <location evidence="1">Cytoplasmic vesicle</location>
        <location evidence="1">Secretory vesicle</location>
    </subcellularLocation>
    <text evidence="1">Cell periphery. The polarization of EXO84 requires actin cables (By similarity).</text>
</comment>
<comment type="similarity">
    <text evidence="4">Belongs to the EXO84 family.</text>
</comment>
<name>EXO84_EREGS</name>
<proteinExistence type="inferred from homology"/>
<keyword id="KW-0175">Coiled coil</keyword>
<keyword id="KW-0968">Cytoplasmic vesicle</keyword>
<keyword id="KW-0268">Exocytosis</keyword>
<keyword id="KW-1017">Isopeptide bond</keyword>
<keyword id="KW-0653">Protein transport</keyword>
<keyword id="KW-1185">Reference proteome</keyword>
<keyword id="KW-0813">Transport</keyword>
<keyword id="KW-0832">Ubl conjugation</keyword>